<comment type="function">
    <text evidence="2">One of the essential components for the initiation of protein synthesis. Protects formylmethionyl-tRNA from spontaneous hydrolysis and promotes its binding to the 30S ribosomal subunits. Also involved in the hydrolysis of GTP during the formation of the 70S ribosomal complex.</text>
</comment>
<comment type="subcellular location">
    <subcellularLocation>
        <location evidence="2">Cytoplasm</location>
    </subcellularLocation>
</comment>
<comment type="similarity">
    <text evidence="2">Belongs to the TRAFAC class translation factor GTPase superfamily. Classic translation factor GTPase family. IF-2 subfamily.</text>
</comment>
<name>IF2_PROM1</name>
<reference key="1">
    <citation type="journal article" date="2007" name="PLoS Genet.">
        <title>Patterns and implications of gene gain and loss in the evolution of Prochlorococcus.</title>
        <authorList>
            <person name="Kettler G.C."/>
            <person name="Martiny A.C."/>
            <person name="Huang K."/>
            <person name="Zucker J."/>
            <person name="Coleman M.L."/>
            <person name="Rodrigue S."/>
            <person name="Chen F."/>
            <person name="Lapidus A."/>
            <person name="Ferriera S."/>
            <person name="Johnson J."/>
            <person name="Steglich C."/>
            <person name="Church G.M."/>
            <person name="Richardson P."/>
            <person name="Chisholm S.W."/>
        </authorList>
    </citation>
    <scope>NUCLEOTIDE SEQUENCE [LARGE SCALE GENOMIC DNA]</scope>
    <source>
        <strain>NATL1A</strain>
    </source>
</reference>
<gene>
    <name evidence="2" type="primary">infB</name>
    <name type="ordered locus">NATL1_18951</name>
</gene>
<protein>
    <recommendedName>
        <fullName evidence="2">Translation initiation factor IF-2</fullName>
    </recommendedName>
</protein>
<dbReference type="EMBL" id="CP000553">
    <property type="protein sequence ID" value="ABM76451.1"/>
    <property type="molecule type" value="Genomic_DNA"/>
</dbReference>
<dbReference type="RefSeq" id="WP_011824428.1">
    <property type="nucleotide sequence ID" value="NC_008819.1"/>
</dbReference>
<dbReference type="SMR" id="A2C4P1"/>
<dbReference type="KEGG" id="pme:NATL1_18951"/>
<dbReference type="eggNOG" id="COG0532">
    <property type="taxonomic scope" value="Bacteria"/>
</dbReference>
<dbReference type="HOGENOM" id="CLU_006301_5_1_3"/>
<dbReference type="Proteomes" id="UP000002592">
    <property type="component" value="Chromosome"/>
</dbReference>
<dbReference type="GO" id="GO:0005829">
    <property type="term" value="C:cytosol"/>
    <property type="evidence" value="ECO:0007669"/>
    <property type="project" value="TreeGrafter"/>
</dbReference>
<dbReference type="GO" id="GO:0005525">
    <property type="term" value="F:GTP binding"/>
    <property type="evidence" value="ECO:0007669"/>
    <property type="project" value="UniProtKB-KW"/>
</dbReference>
<dbReference type="GO" id="GO:0003924">
    <property type="term" value="F:GTPase activity"/>
    <property type="evidence" value="ECO:0007669"/>
    <property type="project" value="UniProtKB-UniRule"/>
</dbReference>
<dbReference type="GO" id="GO:0003743">
    <property type="term" value="F:translation initiation factor activity"/>
    <property type="evidence" value="ECO:0007669"/>
    <property type="project" value="UniProtKB-UniRule"/>
</dbReference>
<dbReference type="CDD" id="cd01887">
    <property type="entry name" value="IF2_eIF5B"/>
    <property type="match status" value="1"/>
</dbReference>
<dbReference type="CDD" id="cd03702">
    <property type="entry name" value="IF2_mtIF2_II"/>
    <property type="match status" value="1"/>
</dbReference>
<dbReference type="CDD" id="cd03692">
    <property type="entry name" value="mtIF2_IVc"/>
    <property type="match status" value="1"/>
</dbReference>
<dbReference type="FunFam" id="2.40.30.10:FF:000007">
    <property type="entry name" value="Translation initiation factor IF-2"/>
    <property type="match status" value="1"/>
</dbReference>
<dbReference type="FunFam" id="2.40.30.10:FF:000008">
    <property type="entry name" value="Translation initiation factor IF-2"/>
    <property type="match status" value="1"/>
</dbReference>
<dbReference type="FunFam" id="3.40.50.10050:FF:000001">
    <property type="entry name" value="Translation initiation factor IF-2"/>
    <property type="match status" value="1"/>
</dbReference>
<dbReference type="FunFam" id="3.40.50.300:FF:000019">
    <property type="entry name" value="Translation initiation factor IF-2"/>
    <property type="match status" value="1"/>
</dbReference>
<dbReference type="Gene3D" id="1.10.10.2480">
    <property type="match status" value="1"/>
</dbReference>
<dbReference type="Gene3D" id="3.40.50.300">
    <property type="entry name" value="P-loop containing nucleotide triphosphate hydrolases"/>
    <property type="match status" value="1"/>
</dbReference>
<dbReference type="Gene3D" id="2.40.30.10">
    <property type="entry name" value="Translation factors"/>
    <property type="match status" value="2"/>
</dbReference>
<dbReference type="Gene3D" id="3.40.50.10050">
    <property type="entry name" value="Translation initiation factor IF- 2, domain 3"/>
    <property type="match status" value="1"/>
</dbReference>
<dbReference type="HAMAP" id="MF_00100_B">
    <property type="entry name" value="IF_2_B"/>
    <property type="match status" value="1"/>
</dbReference>
<dbReference type="InterPro" id="IPR053905">
    <property type="entry name" value="EF-G-like_DII"/>
</dbReference>
<dbReference type="InterPro" id="IPR044145">
    <property type="entry name" value="IF2_II"/>
</dbReference>
<dbReference type="InterPro" id="IPR006847">
    <property type="entry name" value="IF2_N"/>
</dbReference>
<dbReference type="InterPro" id="IPR027417">
    <property type="entry name" value="P-loop_NTPase"/>
</dbReference>
<dbReference type="InterPro" id="IPR005225">
    <property type="entry name" value="Small_GTP-bd"/>
</dbReference>
<dbReference type="InterPro" id="IPR000795">
    <property type="entry name" value="T_Tr_GTP-bd_dom"/>
</dbReference>
<dbReference type="InterPro" id="IPR000178">
    <property type="entry name" value="TF_IF2_bacterial-like"/>
</dbReference>
<dbReference type="InterPro" id="IPR015760">
    <property type="entry name" value="TIF_IF2"/>
</dbReference>
<dbReference type="InterPro" id="IPR023115">
    <property type="entry name" value="TIF_IF2_dom3"/>
</dbReference>
<dbReference type="InterPro" id="IPR036925">
    <property type="entry name" value="TIF_IF2_dom3_sf"/>
</dbReference>
<dbReference type="InterPro" id="IPR009000">
    <property type="entry name" value="Transl_B-barrel_sf"/>
</dbReference>
<dbReference type="NCBIfam" id="TIGR00487">
    <property type="entry name" value="IF-2"/>
    <property type="match status" value="1"/>
</dbReference>
<dbReference type="NCBIfam" id="TIGR00231">
    <property type="entry name" value="small_GTP"/>
    <property type="match status" value="1"/>
</dbReference>
<dbReference type="PANTHER" id="PTHR43381:SF5">
    <property type="entry name" value="TR-TYPE G DOMAIN-CONTAINING PROTEIN"/>
    <property type="match status" value="1"/>
</dbReference>
<dbReference type="PANTHER" id="PTHR43381">
    <property type="entry name" value="TRANSLATION INITIATION FACTOR IF-2-RELATED"/>
    <property type="match status" value="1"/>
</dbReference>
<dbReference type="Pfam" id="PF22042">
    <property type="entry name" value="EF-G_D2"/>
    <property type="match status" value="1"/>
</dbReference>
<dbReference type="Pfam" id="PF00009">
    <property type="entry name" value="GTP_EFTU"/>
    <property type="match status" value="1"/>
</dbReference>
<dbReference type="Pfam" id="PF11987">
    <property type="entry name" value="IF-2"/>
    <property type="match status" value="1"/>
</dbReference>
<dbReference type="Pfam" id="PF04760">
    <property type="entry name" value="IF2_N"/>
    <property type="match status" value="2"/>
</dbReference>
<dbReference type="PRINTS" id="PR00315">
    <property type="entry name" value="ELONGATNFCT"/>
</dbReference>
<dbReference type="SUPFAM" id="SSF52156">
    <property type="entry name" value="Initiation factor IF2/eIF5b, domain 3"/>
    <property type="match status" value="1"/>
</dbReference>
<dbReference type="SUPFAM" id="SSF52540">
    <property type="entry name" value="P-loop containing nucleoside triphosphate hydrolases"/>
    <property type="match status" value="1"/>
</dbReference>
<dbReference type="SUPFAM" id="SSF50447">
    <property type="entry name" value="Translation proteins"/>
    <property type="match status" value="2"/>
</dbReference>
<dbReference type="PROSITE" id="PS51722">
    <property type="entry name" value="G_TR_2"/>
    <property type="match status" value="1"/>
</dbReference>
<dbReference type="PROSITE" id="PS01176">
    <property type="entry name" value="IF2"/>
    <property type="match status" value="1"/>
</dbReference>
<evidence type="ECO:0000250" key="1"/>
<evidence type="ECO:0000255" key="2">
    <source>
        <dbReference type="HAMAP-Rule" id="MF_00100"/>
    </source>
</evidence>
<evidence type="ECO:0000256" key="3">
    <source>
        <dbReference type="SAM" id="MobiDB-lite"/>
    </source>
</evidence>
<accession>A2C4P1</accession>
<keyword id="KW-0963">Cytoplasm</keyword>
<keyword id="KW-0342">GTP-binding</keyword>
<keyword id="KW-0396">Initiation factor</keyword>
<keyword id="KW-0547">Nucleotide-binding</keyword>
<keyword id="KW-0648">Protein biosynthesis</keyword>
<sequence length="1183" mass="128110">MTSSGKIRIYELSKDLSLDNKDVLDAARKLAIAAKSHSSSISTLEANQIKDFLKKSKTINSTSKSSNKLDKQILSVKKNPVKTQKDQKTEPKKKNHDQTELSQAKLNTLLKPSQTLIKNQDSSQANNQKALKNKFPAQQQITAPSKPNKPLPPNPRVEVKPTISKPLTQAESTIPQSEQKKDGQFINQPKRSELAKKPTGQPQQINPQEPKRPLAPPSRPKIDIQDKKPLQPNNQKAKTRINQGEISPQKVGQGNIQKIKSQNKQNQPSRTPQPPTKGNTLELVGAPIRREKPVNKPHTNEVRNKPVMPSRPGAPKPPAAANRQGLSNRPGSNNKIGGTGRPGSQNRQGPNRGGVANRTTQGQNRPGGNNRAGAPVRSGSPNRGGIQNRPGVPTRSLGGPNRSNNRPGVPSGMRKPVAPSELMQLQKPQARPNAPQRKTDSPTSPRPKRENSTGARPPVNRPTPAAPKKPAHRPGGTAAAPRRTGRPDWDDSAKLDALRNKSPQKQRQKVHIIGENDDALTAERGGFAGEQQAVVLSASLARPSKPKVGKRNNGKPLTALKKRKKETTRQRQRRRAMELRAAREAKLVRPEMIVVPEDNLTVQELADMLSVESSEIIKSLFFKGITATVTQSLDLATIETVAEEFGVPVLQDDVEEAAKKTVEMIEEGDLKYLIRRPPVVTVMGHVDHGKTSLLDAIRKSRVAAGEAGGITQHIGAYQIETEHDGSTKKLTFLDTPGHEAFTAMRARGTRVTDVAILVVAADDGVRPQTLEAISHARAAKVPIVVAINKIDKEGSSPDRVKQELSEQDLLSEEWGGDVVMVPVSAIKSENIDKLLEMVLLVTEVEDLQANPDRLAKGTVIEAHLDKAKGPVATLLVQNGTLKSGDVVAAGPVLGKVRAMVDENGSRIKEAGPSCPVEALGFSEVPTAGDEFEVYPDEKAARAVVGERATDARAARLAQQMASRRVSLSSMSGQASEGELKELNIILKADAQGSLEAILGSLEQLPKDEVQVRVLLSAPGEITETDIDLAAASGAVIVGFNTSMASGAKRAADANGVDVRDYEVIYKLLEDIQLAMEGLLEPEMIEEALGVAEVRAIFSIGKSAVAGCYVTNGKIQRNCRARVKRGKQIVFEGDLDSLKRNKDDVKDVSTGFECGIGCDRFANWEEGDQIEAFKLVTQRRKLTN</sequence>
<organism>
    <name type="scientific">Prochlorococcus marinus (strain NATL1A)</name>
    <dbReference type="NCBI Taxonomy" id="167555"/>
    <lineage>
        <taxon>Bacteria</taxon>
        <taxon>Bacillati</taxon>
        <taxon>Cyanobacteriota</taxon>
        <taxon>Cyanophyceae</taxon>
        <taxon>Synechococcales</taxon>
        <taxon>Prochlorococcaceae</taxon>
        <taxon>Prochlorococcus</taxon>
    </lineage>
</organism>
<feature type="chain" id="PRO_1000008297" description="Translation initiation factor IF-2">
    <location>
        <begin position="1"/>
        <end position="1183"/>
    </location>
</feature>
<feature type="domain" description="tr-type G">
    <location>
        <begin position="675"/>
        <end position="847"/>
    </location>
</feature>
<feature type="region of interest" description="Disordered" evidence="3">
    <location>
        <begin position="55"/>
        <end position="512"/>
    </location>
</feature>
<feature type="region of interest" description="Disordered" evidence="3">
    <location>
        <begin position="538"/>
        <end position="574"/>
    </location>
</feature>
<feature type="region of interest" description="G1" evidence="1">
    <location>
        <begin position="684"/>
        <end position="691"/>
    </location>
</feature>
<feature type="region of interest" description="G2" evidence="1">
    <location>
        <begin position="709"/>
        <end position="713"/>
    </location>
</feature>
<feature type="region of interest" description="G3" evidence="1">
    <location>
        <begin position="734"/>
        <end position="737"/>
    </location>
</feature>
<feature type="region of interest" description="G4" evidence="1">
    <location>
        <begin position="788"/>
        <end position="791"/>
    </location>
</feature>
<feature type="region of interest" description="G5" evidence="1">
    <location>
        <begin position="824"/>
        <end position="826"/>
    </location>
</feature>
<feature type="compositionally biased region" description="Basic and acidic residues" evidence="3">
    <location>
        <begin position="83"/>
        <end position="99"/>
    </location>
</feature>
<feature type="compositionally biased region" description="Polar residues" evidence="3">
    <location>
        <begin position="100"/>
        <end position="143"/>
    </location>
</feature>
<feature type="compositionally biased region" description="Polar residues" evidence="3">
    <location>
        <begin position="165"/>
        <end position="177"/>
    </location>
</feature>
<feature type="compositionally biased region" description="Basic and acidic residues" evidence="3">
    <location>
        <begin position="220"/>
        <end position="229"/>
    </location>
</feature>
<feature type="compositionally biased region" description="Polar residues" evidence="3">
    <location>
        <begin position="231"/>
        <end position="252"/>
    </location>
</feature>
<feature type="compositionally biased region" description="Low complexity" evidence="3">
    <location>
        <begin position="253"/>
        <end position="267"/>
    </location>
</feature>
<feature type="compositionally biased region" description="Basic and acidic residues" evidence="3">
    <location>
        <begin position="288"/>
        <end position="304"/>
    </location>
</feature>
<feature type="compositionally biased region" description="Polar residues" evidence="3">
    <location>
        <begin position="324"/>
        <end position="349"/>
    </location>
</feature>
<feature type="compositionally biased region" description="Polar residues" evidence="3">
    <location>
        <begin position="357"/>
        <end position="367"/>
    </location>
</feature>
<feature type="compositionally biased region" description="Basic and acidic residues" evidence="3">
    <location>
        <begin position="485"/>
        <end position="499"/>
    </location>
</feature>
<feature type="compositionally biased region" description="Basic residues" evidence="3">
    <location>
        <begin position="544"/>
        <end position="553"/>
    </location>
</feature>
<feature type="compositionally biased region" description="Basic residues" evidence="3">
    <location>
        <begin position="560"/>
        <end position="574"/>
    </location>
</feature>
<feature type="binding site" evidence="2">
    <location>
        <begin position="684"/>
        <end position="691"/>
    </location>
    <ligand>
        <name>GTP</name>
        <dbReference type="ChEBI" id="CHEBI:37565"/>
    </ligand>
</feature>
<feature type="binding site" evidence="2">
    <location>
        <begin position="734"/>
        <end position="738"/>
    </location>
    <ligand>
        <name>GTP</name>
        <dbReference type="ChEBI" id="CHEBI:37565"/>
    </ligand>
</feature>
<feature type="binding site" evidence="2">
    <location>
        <begin position="788"/>
        <end position="791"/>
    </location>
    <ligand>
        <name>GTP</name>
        <dbReference type="ChEBI" id="CHEBI:37565"/>
    </ligand>
</feature>
<proteinExistence type="inferred from homology"/>